<accession>Q0RDQ6</accession>
<name>RRF_FRAAA</name>
<gene>
    <name evidence="1" type="primary">frr</name>
    <name type="ordered locus">FRAAL5778</name>
</gene>
<protein>
    <recommendedName>
        <fullName evidence="1">Ribosome-recycling factor</fullName>
        <shortName evidence="1">RRF</shortName>
    </recommendedName>
    <alternativeName>
        <fullName evidence="1">Ribosome-releasing factor</fullName>
    </alternativeName>
</protein>
<dbReference type="EMBL" id="CT573213">
    <property type="protein sequence ID" value="CAJ64410.1"/>
    <property type="molecule type" value="Genomic_DNA"/>
</dbReference>
<dbReference type="RefSeq" id="WP_011606850.1">
    <property type="nucleotide sequence ID" value="NC_008278.1"/>
</dbReference>
<dbReference type="SMR" id="Q0RDQ6"/>
<dbReference type="STRING" id="326424.FRAAL5778"/>
<dbReference type="KEGG" id="fal:FRAAL5778"/>
<dbReference type="eggNOG" id="COG0233">
    <property type="taxonomic scope" value="Bacteria"/>
</dbReference>
<dbReference type="HOGENOM" id="CLU_073981_2_0_11"/>
<dbReference type="OrthoDB" id="9804006at2"/>
<dbReference type="Proteomes" id="UP000000657">
    <property type="component" value="Chromosome"/>
</dbReference>
<dbReference type="GO" id="GO:0005737">
    <property type="term" value="C:cytoplasm"/>
    <property type="evidence" value="ECO:0007669"/>
    <property type="project" value="UniProtKB-SubCell"/>
</dbReference>
<dbReference type="GO" id="GO:0043023">
    <property type="term" value="F:ribosomal large subunit binding"/>
    <property type="evidence" value="ECO:0007669"/>
    <property type="project" value="TreeGrafter"/>
</dbReference>
<dbReference type="GO" id="GO:0006415">
    <property type="term" value="P:translational termination"/>
    <property type="evidence" value="ECO:0007669"/>
    <property type="project" value="UniProtKB-UniRule"/>
</dbReference>
<dbReference type="CDD" id="cd00520">
    <property type="entry name" value="RRF"/>
    <property type="match status" value="1"/>
</dbReference>
<dbReference type="FunFam" id="1.10.132.20:FF:000001">
    <property type="entry name" value="Ribosome-recycling factor"/>
    <property type="match status" value="1"/>
</dbReference>
<dbReference type="FunFam" id="3.30.1360.40:FF:000001">
    <property type="entry name" value="Ribosome-recycling factor"/>
    <property type="match status" value="1"/>
</dbReference>
<dbReference type="Gene3D" id="3.30.1360.40">
    <property type="match status" value="1"/>
</dbReference>
<dbReference type="Gene3D" id="1.10.132.20">
    <property type="entry name" value="Ribosome-recycling factor"/>
    <property type="match status" value="1"/>
</dbReference>
<dbReference type="HAMAP" id="MF_00040">
    <property type="entry name" value="RRF"/>
    <property type="match status" value="1"/>
</dbReference>
<dbReference type="InterPro" id="IPR002661">
    <property type="entry name" value="Ribosome_recyc_fac"/>
</dbReference>
<dbReference type="InterPro" id="IPR023584">
    <property type="entry name" value="Ribosome_recyc_fac_dom"/>
</dbReference>
<dbReference type="InterPro" id="IPR036191">
    <property type="entry name" value="RRF_sf"/>
</dbReference>
<dbReference type="NCBIfam" id="TIGR00496">
    <property type="entry name" value="frr"/>
    <property type="match status" value="1"/>
</dbReference>
<dbReference type="PANTHER" id="PTHR20982:SF3">
    <property type="entry name" value="MITOCHONDRIAL RIBOSOME RECYCLING FACTOR PSEUDO 1"/>
    <property type="match status" value="1"/>
</dbReference>
<dbReference type="PANTHER" id="PTHR20982">
    <property type="entry name" value="RIBOSOME RECYCLING FACTOR"/>
    <property type="match status" value="1"/>
</dbReference>
<dbReference type="Pfam" id="PF01765">
    <property type="entry name" value="RRF"/>
    <property type="match status" value="1"/>
</dbReference>
<dbReference type="SUPFAM" id="SSF55194">
    <property type="entry name" value="Ribosome recycling factor, RRF"/>
    <property type="match status" value="1"/>
</dbReference>
<proteinExistence type="inferred from homology"/>
<keyword id="KW-0963">Cytoplasm</keyword>
<keyword id="KW-0648">Protein biosynthesis</keyword>
<keyword id="KW-1185">Reference proteome</keyword>
<comment type="function">
    <text evidence="1">Responsible for the release of ribosomes from messenger RNA at the termination of protein biosynthesis. May increase the efficiency of translation by recycling ribosomes from one round of translation to another.</text>
</comment>
<comment type="subcellular location">
    <subcellularLocation>
        <location evidence="1">Cytoplasm</location>
    </subcellularLocation>
</comment>
<comment type="similarity">
    <text evidence="1">Belongs to the RRF family.</text>
</comment>
<evidence type="ECO:0000255" key="1">
    <source>
        <dbReference type="HAMAP-Rule" id="MF_00040"/>
    </source>
</evidence>
<feature type="chain" id="PRO_1000003162" description="Ribosome-recycling factor">
    <location>
        <begin position="1"/>
        <end position="185"/>
    </location>
</feature>
<sequence length="185" mass="20754">MIDDTLLDAEEKMEKAVSVAKEDFANIRTGRITPAVFSKIVVDYYGAPTPVQQLASFHIPEPRMVIITPYDKSSLASIEKAVRDSDLGVNPSNDGTIIRIVFPELSEQRRRDLVKVARSKAEEARVSIRNVRRHAKDGIDRIVRDGDAGEDEGRRAEKDLDEATHRYVGQVDELLRLKEADLLSV</sequence>
<organism>
    <name type="scientific">Frankia alni (strain DSM 45986 / CECT 9034 / ACN14a)</name>
    <dbReference type="NCBI Taxonomy" id="326424"/>
    <lineage>
        <taxon>Bacteria</taxon>
        <taxon>Bacillati</taxon>
        <taxon>Actinomycetota</taxon>
        <taxon>Actinomycetes</taxon>
        <taxon>Frankiales</taxon>
        <taxon>Frankiaceae</taxon>
        <taxon>Frankia</taxon>
    </lineage>
</organism>
<reference key="1">
    <citation type="journal article" date="2007" name="Genome Res.">
        <title>Genome characteristics of facultatively symbiotic Frankia sp. strains reflect host range and host plant biogeography.</title>
        <authorList>
            <person name="Normand P."/>
            <person name="Lapierre P."/>
            <person name="Tisa L.S."/>
            <person name="Gogarten J.P."/>
            <person name="Alloisio N."/>
            <person name="Bagnarol E."/>
            <person name="Bassi C.A."/>
            <person name="Berry A.M."/>
            <person name="Bickhart D.M."/>
            <person name="Choisne N."/>
            <person name="Couloux A."/>
            <person name="Cournoyer B."/>
            <person name="Cruveiller S."/>
            <person name="Daubin V."/>
            <person name="Demange N."/>
            <person name="Francino M.P."/>
            <person name="Goltsman E."/>
            <person name="Huang Y."/>
            <person name="Kopp O.R."/>
            <person name="Labarre L."/>
            <person name="Lapidus A."/>
            <person name="Lavire C."/>
            <person name="Marechal J."/>
            <person name="Martinez M."/>
            <person name="Mastronunzio J.E."/>
            <person name="Mullin B.C."/>
            <person name="Niemann J."/>
            <person name="Pujic P."/>
            <person name="Rawnsley T."/>
            <person name="Rouy Z."/>
            <person name="Schenowitz C."/>
            <person name="Sellstedt A."/>
            <person name="Tavares F."/>
            <person name="Tomkins J.P."/>
            <person name="Vallenet D."/>
            <person name="Valverde C."/>
            <person name="Wall L.G."/>
            <person name="Wang Y."/>
            <person name="Medigue C."/>
            <person name="Benson D.R."/>
        </authorList>
    </citation>
    <scope>NUCLEOTIDE SEQUENCE [LARGE SCALE GENOMIC DNA]</scope>
    <source>
        <strain>DSM 45986 / CECT 9034 / ACN14a</strain>
    </source>
</reference>